<comment type="function">
    <text evidence="1">Catalyzes the condensation of carbamoyl phosphate and aspartate to form carbamoyl aspartate and inorganic phosphate, the committed step in the de novo pyrimidine nucleotide biosynthesis pathway.</text>
</comment>
<comment type="catalytic activity">
    <reaction evidence="1">
        <text>carbamoyl phosphate + L-aspartate = N-carbamoyl-L-aspartate + phosphate + H(+)</text>
        <dbReference type="Rhea" id="RHEA:20013"/>
        <dbReference type="ChEBI" id="CHEBI:15378"/>
        <dbReference type="ChEBI" id="CHEBI:29991"/>
        <dbReference type="ChEBI" id="CHEBI:32814"/>
        <dbReference type="ChEBI" id="CHEBI:43474"/>
        <dbReference type="ChEBI" id="CHEBI:58228"/>
        <dbReference type="EC" id="2.1.3.2"/>
    </reaction>
</comment>
<comment type="pathway">
    <text evidence="1">Pyrimidine metabolism; UMP biosynthesis via de novo pathway; (S)-dihydroorotate from bicarbonate: step 2/3.</text>
</comment>
<comment type="subunit">
    <text evidence="1">Heterododecamer (2C3:3R2) of six catalytic PyrB chains organized as two trimers (C3), and six regulatory PyrI chains organized as three dimers (R2).</text>
</comment>
<comment type="similarity">
    <text evidence="1">Belongs to the aspartate/ornithine carbamoyltransferase superfamily. ATCase family.</text>
</comment>
<feature type="chain" id="PRO_0000113170" description="Aspartate carbamoyltransferase catalytic subunit">
    <location>
        <begin position="1"/>
        <end position="309"/>
    </location>
</feature>
<feature type="binding site" evidence="1">
    <location>
        <position position="55"/>
    </location>
    <ligand>
        <name>carbamoyl phosphate</name>
        <dbReference type="ChEBI" id="CHEBI:58228"/>
    </ligand>
</feature>
<feature type="binding site" evidence="1">
    <location>
        <position position="56"/>
    </location>
    <ligand>
        <name>carbamoyl phosphate</name>
        <dbReference type="ChEBI" id="CHEBI:58228"/>
    </ligand>
</feature>
<feature type="binding site" evidence="1">
    <location>
        <position position="85"/>
    </location>
    <ligand>
        <name>L-aspartate</name>
        <dbReference type="ChEBI" id="CHEBI:29991"/>
    </ligand>
</feature>
<feature type="binding site" evidence="1">
    <location>
        <position position="106"/>
    </location>
    <ligand>
        <name>carbamoyl phosphate</name>
        <dbReference type="ChEBI" id="CHEBI:58228"/>
    </ligand>
</feature>
<feature type="binding site" evidence="1">
    <location>
        <position position="135"/>
    </location>
    <ligand>
        <name>carbamoyl phosphate</name>
        <dbReference type="ChEBI" id="CHEBI:58228"/>
    </ligand>
</feature>
<feature type="binding site" evidence="1">
    <location>
        <position position="138"/>
    </location>
    <ligand>
        <name>carbamoyl phosphate</name>
        <dbReference type="ChEBI" id="CHEBI:58228"/>
    </ligand>
</feature>
<feature type="binding site" evidence="1">
    <location>
        <position position="168"/>
    </location>
    <ligand>
        <name>L-aspartate</name>
        <dbReference type="ChEBI" id="CHEBI:29991"/>
    </ligand>
</feature>
<feature type="binding site" evidence="1">
    <location>
        <position position="230"/>
    </location>
    <ligand>
        <name>L-aspartate</name>
        <dbReference type="ChEBI" id="CHEBI:29991"/>
    </ligand>
</feature>
<feature type="binding site" evidence="1">
    <location>
        <position position="268"/>
    </location>
    <ligand>
        <name>carbamoyl phosphate</name>
        <dbReference type="ChEBI" id="CHEBI:58228"/>
    </ligand>
</feature>
<feature type="binding site" evidence="1">
    <location>
        <position position="269"/>
    </location>
    <ligand>
        <name>carbamoyl phosphate</name>
        <dbReference type="ChEBI" id="CHEBI:58228"/>
    </ligand>
</feature>
<evidence type="ECO:0000255" key="1">
    <source>
        <dbReference type="HAMAP-Rule" id="MF_00001"/>
    </source>
</evidence>
<dbReference type="EC" id="2.1.3.2" evidence="1"/>
<dbReference type="EMBL" id="CR378664">
    <property type="protein sequence ID" value="CAG18905.1"/>
    <property type="molecule type" value="Genomic_DNA"/>
</dbReference>
<dbReference type="RefSeq" id="WP_011217261.1">
    <property type="nucleotide sequence ID" value="NC_006370.1"/>
</dbReference>
<dbReference type="SMR" id="Q6LUX0"/>
<dbReference type="STRING" id="298386.PBPRA0474"/>
<dbReference type="KEGG" id="ppr:PBPRA0474"/>
<dbReference type="eggNOG" id="COG0540">
    <property type="taxonomic scope" value="Bacteria"/>
</dbReference>
<dbReference type="HOGENOM" id="CLU_043846_1_2_6"/>
<dbReference type="UniPathway" id="UPA00070">
    <property type="reaction ID" value="UER00116"/>
</dbReference>
<dbReference type="Proteomes" id="UP000000593">
    <property type="component" value="Chromosome 1"/>
</dbReference>
<dbReference type="GO" id="GO:0005829">
    <property type="term" value="C:cytosol"/>
    <property type="evidence" value="ECO:0007669"/>
    <property type="project" value="TreeGrafter"/>
</dbReference>
<dbReference type="GO" id="GO:0016597">
    <property type="term" value="F:amino acid binding"/>
    <property type="evidence" value="ECO:0007669"/>
    <property type="project" value="InterPro"/>
</dbReference>
<dbReference type="GO" id="GO:0004070">
    <property type="term" value="F:aspartate carbamoyltransferase activity"/>
    <property type="evidence" value="ECO:0007669"/>
    <property type="project" value="UniProtKB-UniRule"/>
</dbReference>
<dbReference type="GO" id="GO:0006207">
    <property type="term" value="P:'de novo' pyrimidine nucleobase biosynthetic process"/>
    <property type="evidence" value="ECO:0007669"/>
    <property type="project" value="InterPro"/>
</dbReference>
<dbReference type="GO" id="GO:0044205">
    <property type="term" value="P:'de novo' UMP biosynthetic process"/>
    <property type="evidence" value="ECO:0007669"/>
    <property type="project" value="UniProtKB-UniRule"/>
</dbReference>
<dbReference type="GO" id="GO:0006520">
    <property type="term" value="P:amino acid metabolic process"/>
    <property type="evidence" value="ECO:0007669"/>
    <property type="project" value="InterPro"/>
</dbReference>
<dbReference type="FunFam" id="3.40.50.1370:FF:000001">
    <property type="entry name" value="Aspartate carbamoyltransferase"/>
    <property type="match status" value="1"/>
</dbReference>
<dbReference type="FunFam" id="3.40.50.1370:FF:000002">
    <property type="entry name" value="Aspartate carbamoyltransferase 2"/>
    <property type="match status" value="1"/>
</dbReference>
<dbReference type="Gene3D" id="3.40.50.1370">
    <property type="entry name" value="Aspartate/ornithine carbamoyltransferase"/>
    <property type="match status" value="2"/>
</dbReference>
<dbReference type="HAMAP" id="MF_00001">
    <property type="entry name" value="Asp_carb_tr"/>
    <property type="match status" value="1"/>
</dbReference>
<dbReference type="InterPro" id="IPR006132">
    <property type="entry name" value="Asp/Orn_carbamoyltranf_P-bd"/>
</dbReference>
<dbReference type="InterPro" id="IPR006130">
    <property type="entry name" value="Asp/Orn_carbamoylTrfase"/>
</dbReference>
<dbReference type="InterPro" id="IPR036901">
    <property type="entry name" value="Asp/Orn_carbamoylTrfase_sf"/>
</dbReference>
<dbReference type="InterPro" id="IPR002082">
    <property type="entry name" value="Asp_carbamoyltransf"/>
</dbReference>
<dbReference type="InterPro" id="IPR006131">
    <property type="entry name" value="Asp_carbamoyltransf_Asp/Orn-bd"/>
</dbReference>
<dbReference type="NCBIfam" id="TIGR00670">
    <property type="entry name" value="asp_carb_tr"/>
    <property type="match status" value="1"/>
</dbReference>
<dbReference type="NCBIfam" id="NF002032">
    <property type="entry name" value="PRK00856.1"/>
    <property type="match status" value="1"/>
</dbReference>
<dbReference type="PANTHER" id="PTHR45753:SF6">
    <property type="entry name" value="ASPARTATE CARBAMOYLTRANSFERASE"/>
    <property type="match status" value="1"/>
</dbReference>
<dbReference type="PANTHER" id="PTHR45753">
    <property type="entry name" value="ORNITHINE CARBAMOYLTRANSFERASE, MITOCHONDRIAL"/>
    <property type="match status" value="1"/>
</dbReference>
<dbReference type="Pfam" id="PF00185">
    <property type="entry name" value="OTCace"/>
    <property type="match status" value="1"/>
</dbReference>
<dbReference type="Pfam" id="PF02729">
    <property type="entry name" value="OTCace_N"/>
    <property type="match status" value="1"/>
</dbReference>
<dbReference type="PRINTS" id="PR00100">
    <property type="entry name" value="AOTCASE"/>
</dbReference>
<dbReference type="PRINTS" id="PR00101">
    <property type="entry name" value="ATCASE"/>
</dbReference>
<dbReference type="SUPFAM" id="SSF53671">
    <property type="entry name" value="Aspartate/ornithine carbamoyltransferase"/>
    <property type="match status" value="1"/>
</dbReference>
<dbReference type="PROSITE" id="PS00097">
    <property type="entry name" value="CARBAMOYLTRANSFERASE"/>
    <property type="match status" value="1"/>
</dbReference>
<reference key="1">
    <citation type="journal article" date="2005" name="Science">
        <title>Life at depth: Photobacterium profundum genome sequence and expression analysis.</title>
        <authorList>
            <person name="Vezzi A."/>
            <person name="Campanaro S."/>
            <person name="D'Angelo M."/>
            <person name="Simonato F."/>
            <person name="Vitulo N."/>
            <person name="Lauro F.M."/>
            <person name="Cestaro A."/>
            <person name="Malacrida G."/>
            <person name="Simionati B."/>
            <person name="Cannata N."/>
            <person name="Romualdi C."/>
            <person name="Bartlett D.H."/>
            <person name="Valle G."/>
        </authorList>
    </citation>
    <scope>NUCLEOTIDE SEQUENCE [LARGE SCALE GENOMIC DNA]</scope>
    <source>
        <strain>ATCC BAA-1253 / SS9</strain>
    </source>
</reference>
<gene>
    <name evidence="1" type="primary">pyrB</name>
    <name type="ordered locus">PBPRA0474</name>
</gene>
<organism>
    <name type="scientific">Photobacterium profundum (strain SS9)</name>
    <dbReference type="NCBI Taxonomy" id="298386"/>
    <lineage>
        <taxon>Bacteria</taxon>
        <taxon>Pseudomonadati</taxon>
        <taxon>Pseudomonadota</taxon>
        <taxon>Gammaproteobacteria</taxon>
        <taxon>Vibrionales</taxon>
        <taxon>Vibrionaceae</taxon>
        <taxon>Photobacterium</taxon>
    </lineage>
</organism>
<keyword id="KW-0665">Pyrimidine biosynthesis</keyword>
<keyword id="KW-1185">Reference proteome</keyword>
<keyword id="KW-0808">Transferase</keyword>
<protein>
    <recommendedName>
        <fullName evidence="1">Aspartate carbamoyltransferase catalytic subunit</fullName>
        <ecNumber evidence="1">2.1.3.2</ecNumber>
    </recommendedName>
    <alternativeName>
        <fullName evidence="1">Aspartate transcarbamylase</fullName>
        <shortName evidence="1">ATCase</shortName>
    </alternativeName>
</protein>
<sequence length="309" mass="34434">MANSLFQKHIISIPELNRSELELIVETAGILKAEPNPELLKNKVVASCFFEPSTRTRLSFETAVQRLGGTVIGFDNGGNTSLAKKGETLADSVQVISSYVDAFVMRHPQEGAARLASEFSNGVPIINGGDGANQHPTQTLLDLFSIFETQGRLDNLNVAFVGDLKYGRTVHSLTQALSKFNNINFFFVAPEILAMPDYICEELDEAGINYSLHASMEEVIPELDVLYMTRVQKERFDESEYAHMKAAYILTADMLAEARDNMKILHPLPRIDEITVDVDKTKHAYYFQQAENGVYAREALLALVLNEQL</sequence>
<name>PYRB_PHOPR</name>
<accession>Q6LUX0</accession>
<proteinExistence type="inferred from homology"/>